<sequence length="305" mass="34196">MVKPEKFIPKAIEKISQEIKEGKAIIALSGGVDSSVCAELAYRAIGDRLQPIYIDTGLMRKGETERIKHIFSHMNLHVVYAKDRFLEALAGVTDPEEKRKAVGETFIRVFEDEAKRIAADYLIQGTIYPDRIESEGGIKSHHNVGGLPSVMDFEKIVEPIEDLYKDEVREVAWALQLPEEICERMPFPGPGLAVRILGEVTEEKLEVVREANFIVEEELLERFCPWQTFAAVLGKGTGVKGDIRAYGWIVAVRAVGSRDGMTAEALELPWEVLKHLEARITSEIPKVARVVYDITPKPPATIEFE</sequence>
<organism>
    <name type="scientific">Methanosarcina acetivorans (strain ATCC 35395 / DSM 2834 / JCM 12185 / C2A)</name>
    <dbReference type="NCBI Taxonomy" id="188937"/>
    <lineage>
        <taxon>Archaea</taxon>
        <taxon>Methanobacteriati</taxon>
        <taxon>Methanobacteriota</taxon>
        <taxon>Stenosarchaea group</taxon>
        <taxon>Methanomicrobia</taxon>
        <taxon>Methanosarcinales</taxon>
        <taxon>Methanosarcinaceae</taxon>
        <taxon>Methanosarcina</taxon>
    </lineage>
</organism>
<keyword id="KW-0067">ATP-binding</keyword>
<keyword id="KW-0332">GMP biosynthesis</keyword>
<keyword id="KW-0436">Ligase</keyword>
<keyword id="KW-0547">Nucleotide-binding</keyword>
<keyword id="KW-0658">Purine biosynthesis</keyword>
<keyword id="KW-1185">Reference proteome</keyword>
<dbReference type="EC" id="6.3.5.2"/>
<dbReference type="EMBL" id="AE010299">
    <property type="protein sequence ID" value="AAM07851.1"/>
    <property type="molecule type" value="Genomic_DNA"/>
</dbReference>
<dbReference type="RefSeq" id="WP_011024387.1">
    <property type="nucleotide sequence ID" value="NC_003552.1"/>
</dbReference>
<dbReference type="SMR" id="Q8THK3"/>
<dbReference type="FunCoup" id="Q8THK3">
    <property type="interactions" value="202"/>
</dbReference>
<dbReference type="STRING" id="188937.MA_4511"/>
<dbReference type="EnsemblBacteria" id="AAM07851">
    <property type="protein sequence ID" value="AAM07851"/>
    <property type="gene ID" value="MA_4511"/>
</dbReference>
<dbReference type="GeneID" id="1476405"/>
<dbReference type="KEGG" id="mac:MA_4511"/>
<dbReference type="HOGENOM" id="CLU_014340_0_0_2"/>
<dbReference type="InParanoid" id="Q8THK3"/>
<dbReference type="OrthoDB" id="33844at2157"/>
<dbReference type="PhylomeDB" id="Q8THK3"/>
<dbReference type="UniPathway" id="UPA00189">
    <property type="reaction ID" value="UER00296"/>
</dbReference>
<dbReference type="Proteomes" id="UP000002487">
    <property type="component" value="Chromosome"/>
</dbReference>
<dbReference type="GO" id="GO:0005829">
    <property type="term" value="C:cytosol"/>
    <property type="evidence" value="ECO:0000318"/>
    <property type="project" value="GO_Central"/>
</dbReference>
<dbReference type="GO" id="GO:0005524">
    <property type="term" value="F:ATP binding"/>
    <property type="evidence" value="ECO:0007669"/>
    <property type="project" value="UniProtKB-UniRule"/>
</dbReference>
<dbReference type="GO" id="GO:0003921">
    <property type="term" value="F:GMP synthase activity"/>
    <property type="evidence" value="ECO:0000318"/>
    <property type="project" value="GO_Central"/>
</dbReference>
<dbReference type="GO" id="GO:0006177">
    <property type="term" value="P:GMP biosynthetic process"/>
    <property type="evidence" value="ECO:0000318"/>
    <property type="project" value="GO_Central"/>
</dbReference>
<dbReference type="CDD" id="cd01997">
    <property type="entry name" value="GMP_synthase_C"/>
    <property type="match status" value="1"/>
</dbReference>
<dbReference type="FunFam" id="3.30.300.10:FF:000002">
    <property type="entry name" value="GMP synthase [glutamine-hydrolyzing]"/>
    <property type="match status" value="1"/>
</dbReference>
<dbReference type="FunFam" id="3.40.50.620:FF:000208">
    <property type="entry name" value="GMP synthase [glutamine-hydrolyzing] subunit B"/>
    <property type="match status" value="1"/>
</dbReference>
<dbReference type="Gene3D" id="3.30.300.10">
    <property type="match status" value="1"/>
</dbReference>
<dbReference type="Gene3D" id="3.40.50.620">
    <property type="entry name" value="HUPs"/>
    <property type="match status" value="1"/>
</dbReference>
<dbReference type="HAMAP" id="MF_00345">
    <property type="entry name" value="GMP_synthase_B"/>
    <property type="match status" value="1"/>
</dbReference>
<dbReference type="InterPro" id="IPR001674">
    <property type="entry name" value="GMP_synth_C"/>
</dbReference>
<dbReference type="InterPro" id="IPR026598">
    <property type="entry name" value="GMP_synthase_B"/>
</dbReference>
<dbReference type="InterPro" id="IPR025777">
    <property type="entry name" value="GMPS_ATP_PPase_dom"/>
</dbReference>
<dbReference type="InterPro" id="IPR022310">
    <property type="entry name" value="NAD/GMP_synthase"/>
</dbReference>
<dbReference type="InterPro" id="IPR014729">
    <property type="entry name" value="Rossmann-like_a/b/a_fold"/>
</dbReference>
<dbReference type="NCBIfam" id="TIGR00884">
    <property type="entry name" value="guaA_Cterm"/>
    <property type="match status" value="1"/>
</dbReference>
<dbReference type="PANTHER" id="PTHR11922:SF2">
    <property type="entry name" value="GMP SYNTHASE [GLUTAMINE-HYDROLYZING]"/>
    <property type="match status" value="1"/>
</dbReference>
<dbReference type="PANTHER" id="PTHR11922">
    <property type="entry name" value="GMP SYNTHASE-RELATED"/>
    <property type="match status" value="1"/>
</dbReference>
<dbReference type="Pfam" id="PF00958">
    <property type="entry name" value="GMP_synt_C"/>
    <property type="match status" value="1"/>
</dbReference>
<dbReference type="Pfam" id="PF02540">
    <property type="entry name" value="NAD_synthase"/>
    <property type="match status" value="1"/>
</dbReference>
<dbReference type="SUPFAM" id="SSF52402">
    <property type="entry name" value="Adenine nucleotide alpha hydrolases-like"/>
    <property type="match status" value="1"/>
</dbReference>
<dbReference type="SUPFAM" id="SSF54810">
    <property type="entry name" value="GMP synthetase C-terminal dimerisation domain"/>
    <property type="match status" value="1"/>
</dbReference>
<dbReference type="PROSITE" id="PS51553">
    <property type="entry name" value="GMPS_ATP_PPASE"/>
    <property type="match status" value="1"/>
</dbReference>
<name>GUAAB_METAC</name>
<feature type="chain" id="PRO_0000140240" description="GMP synthase [glutamine-hydrolyzing] subunit B">
    <location>
        <begin position="1"/>
        <end position="305"/>
    </location>
</feature>
<feature type="domain" description="GMPS ATP-PPase">
    <location>
        <begin position="2"/>
        <end position="184"/>
    </location>
</feature>
<feature type="binding site" evidence="1">
    <location>
        <begin position="29"/>
        <end position="35"/>
    </location>
    <ligand>
        <name>ATP</name>
        <dbReference type="ChEBI" id="CHEBI:30616"/>
    </ligand>
</feature>
<gene>
    <name type="primary">guaAB</name>
    <name type="synonym">guaA</name>
    <name type="ordered locus">MA_4511</name>
</gene>
<proteinExistence type="inferred from homology"/>
<reference key="1">
    <citation type="journal article" date="2002" name="Genome Res.">
        <title>The genome of Methanosarcina acetivorans reveals extensive metabolic and physiological diversity.</title>
        <authorList>
            <person name="Galagan J.E."/>
            <person name="Nusbaum C."/>
            <person name="Roy A."/>
            <person name="Endrizzi M.G."/>
            <person name="Macdonald P."/>
            <person name="FitzHugh W."/>
            <person name="Calvo S."/>
            <person name="Engels R."/>
            <person name="Smirnov S."/>
            <person name="Atnoor D."/>
            <person name="Brown A."/>
            <person name="Allen N."/>
            <person name="Naylor J."/>
            <person name="Stange-Thomann N."/>
            <person name="DeArellano K."/>
            <person name="Johnson R."/>
            <person name="Linton L."/>
            <person name="McEwan P."/>
            <person name="McKernan K."/>
            <person name="Talamas J."/>
            <person name="Tirrell A."/>
            <person name="Ye W."/>
            <person name="Zimmer A."/>
            <person name="Barber R.D."/>
            <person name="Cann I."/>
            <person name="Graham D.E."/>
            <person name="Grahame D.A."/>
            <person name="Guss A.M."/>
            <person name="Hedderich R."/>
            <person name="Ingram-Smith C."/>
            <person name="Kuettner H.C."/>
            <person name="Krzycki J.A."/>
            <person name="Leigh J.A."/>
            <person name="Li W."/>
            <person name="Liu J."/>
            <person name="Mukhopadhyay B."/>
            <person name="Reeve J.N."/>
            <person name="Smith K."/>
            <person name="Springer T.A."/>
            <person name="Umayam L.A."/>
            <person name="White O."/>
            <person name="White R.H."/>
            <person name="de Macario E.C."/>
            <person name="Ferry J.G."/>
            <person name="Jarrell K.F."/>
            <person name="Jing H."/>
            <person name="Macario A.J.L."/>
            <person name="Paulsen I.T."/>
            <person name="Pritchett M."/>
            <person name="Sowers K.R."/>
            <person name="Swanson R.V."/>
            <person name="Zinder S.H."/>
            <person name="Lander E."/>
            <person name="Metcalf W.W."/>
            <person name="Birren B."/>
        </authorList>
    </citation>
    <scope>NUCLEOTIDE SEQUENCE [LARGE SCALE GENOMIC DNA]</scope>
    <source>
        <strain>ATCC 35395 / DSM 2834 / JCM 12185 / C2A</strain>
    </source>
</reference>
<accession>Q8THK3</accession>
<evidence type="ECO:0000250" key="1"/>
<evidence type="ECO:0000305" key="2"/>
<protein>
    <recommendedName>
        <fullName>GMP synthase [glutamine-hydrolyzing] subunit B</fullName>
        <ecNumber>6.3.5.2</ecNumber>
    </recommendedName>
    <alternativeName>
        <fullName>GMP synthetase</fullName>
    </alternativeName>
</protein>
<comment type="function">
    <text evidence="1">Catalyzes the synthesis of GMP from XMP.</text>
</comment>
<comment type="catalytic activity">
    <reaction>
        <text>XMP + L-glutamine + ATP + H2O = GMP + L-glutamate + AMP + diphosphate + 2 H(+)</text>
        <dbReference type="Rhea" id="RHEA:11680"/>
        <dbReference type="ChEBI" id="CHEBI:15377"/>
        <dbReference type="ChEBI" id="CHEBI:15378"/>
        <dbReference type="ChEBI" id="CHEBI:29985"/>
        <dbReference type="ChEBI" id="CHEBI:30616"/>
        <dbReference type="ChEBI" id="CHEBI:33019"/>
        <dbReference type="ChEBI" id="CHEBI:57464"/>
        <dbReference type="ChEBI" id="CHEBI:58115"/>
        <dbReference type="ChEBI" id="CHEBI:58359"/>
        <dbReference type="ChEBI" id="CHEBI:456215"/>
        <dbReference type="EC" id="6.3.5.2"/>
    </reaction>
</comment>
<comment type="pathway">
    <text>Purine metabolism; GMP biosynthesis; GMP from XMP (L-Gln route): step 1/1.</text>
</comment>
<comment type="subunit">
    <text evidence="2">Heterodimer composed of a glutamine amidotransferase subunit (A) and a GMP-binding subunit (B).</text>
</comment>